<gene>
    <name type="ordered locus">SCO0839</name>
    <name type="ORF">SCF43A.29c</name>
</gene>
<sequence length="705" mass="73317">MSTPSRPFRSPRRARWLVPVLLLLVWLVVGGALGPYAGKLGEVATNDQASFLPRSAESTRVVDAQQAFQQDETLPVIVVWTADGDGDAAVTAHQQAATRSVAGLEGDPGIVGPASPALPSDDGRALQAVVQVEPDLGERLPDVLADIGDAAGQVPGTRAQLAGPAASQADLSDAFAGIDGLLLAVALITVLVILLLVYRSVLLPLVIILSAVFALALSCAIVYALADRDVVRVDGQVQGILSILVIGAATDYALLLTARFREELARHPDRFGAVRAALRDSWGAVVASAATVALGLLALLLSDLTNNRALGPVGAIGIVCSVLSTLTFLPAVLVLLGRAAYWPAKPVRTGDPEAGHRLWHRVAALVDRAPRRIWALSLAALLACAAFAPTLSSKGVPLDEIFVNDTPSVAAQQTLAEHFPGGSGNPAVVIAEADRLDPVLRAARDTRGVASAAPVTDSGRPGAGTPLVVDGRVRIDATLEAPADSDAAKSTVVRLRAAVHEVSGADALVGGYTAQQYDTQETAAEDRTLIVPVVLAIILVILILLLRSLLMPVLLVATVALNFLATLGVSALVFTHVFGFSGTDASVPLYGFVFLVALGVDYNIFLMSRVREEALRHGVREGILRGLTATGGVITSAGVVLAATFAALGVIPLAFLLQIAFIVAFGVLLDTLVVRSLLVPALARDIGAVAWWPGRLGHRTPAGRD</sequence>
<reference key="1">
    <citation type="journal article" date="2002" name="Nature">
        <title>Complete genome sequence of the model actinomycete Streptomyces coelicolor A3(2).</title>
        <authorList>
            <person name="Bentley S.D."/>
            <person name="Chater K.F."/>
            <person name="Cerdeno-Tarraga A.-M."/>
            <person name="Challis G.L."/>
            <person name="Thomson N.R."/>
            <person name="James K.D."/>
            <person name="Harris D.E."/>
            <person name="Quail M.A."/>
            <person name="Kieser H."/>
            <person name="Harper D."/>
            <person name="Bateman A."/>
            <person name="Brown S."/>
            <person name="Chandra G."/>
            <person name="Chen C.W."/>
            <person name="Collins M."/>
            <person name="Cronin A."/>
            <person name="Fraser A."/>
            <person name="Goble A."/>
            <person name="Hidalgo J."/>
            <person name="Hornsby T."/>
            <person name="Howarth S."/>
            <person name="Huang C.-H."/>
            <person name="Kieser T."/>
            <person name="Larke L."/>
            <person name="Murphy L.D."/>
            <person name="Oliver K."/>
            <person name="O'Neil S."/>
            <person name="Rabbinowitsch E."/>
            <person name="Rajandream M.A."/>
            <person name="Rutherford K.M."/>
            <person name="Rutter S."/>
            <person name="Seeger K."/>
            <person name="Saunders D."/>
            <person name="Sharp S."/>
            <person name="Squares R."/>
            <person name="Squares S."/>
            <person name="Taylor K."/>
            <person name="Warren T."/>
            <person name="Wietzorrek A."/>
            <person name="Woodward J.R."/>
            <person name="Barrell B.G."/>
            <person name="Parkhill J."/>
            <person name="Hopwood D.A."/>
        </authorList>
    </citation>
    <scope>NUCLEOTIDE SEQUENCE [LARGE SCALE GENOMIC DNA]</scope>
    <source>
        <strain>ATCC BAA-471 / A3(2) / M145</strain>
    </source>
</reference>
<protein>
    <recommendedName>
        <fullName>Putative membrane protein SCO0839</fullName>
    </recommendedName>
</protein>
<dbReference type="EMBL" id="AL939106">
    <property type="protein sequence ID" value="CAB48916.1"/>
    <property type="molecule type" value="Genomic_DNA"/>
</dbReference>
<dbReference type="PIR" id="T36452">
    <property type="entry name" value="T36452"/>
</dbReference>
<dbReference type="RefSeq" id="NP_625139.1">
    <property type="nucleotide sequence ID" value="NC_003888.3"/>
</dbReference>
<dbReference type="RefSeq" id="WP_011027382.1">
    <property type="nucleotide sequence ID" value="NZ_VNID01000004.1"/>
</dbReference>
<dbReference type="SMR" id="Q9XA86"/>
<dbReference type="STRING" id="100226.gene:17758422"/>
<dbReference type="PaxDb" id="100226-SCO0839"/>
<dbReference type="KEGG" id="sco:SCO0839"/>
<dbReference type="PATRIC" id="fig|100226.15.peg.831"/>
<dbReference type="eggNOG" id="COG2409">
    <property type="taxonomic scope" value="Bacteria"/>
</dbReference>
<dbReference type="HOGENOM" id="CLU_005108_4_1_11"/>
<dbReference type="InParanoid" id="Q9XA86"/>
<dbReference type="OrthoDB" id="2365435at2"/>
<dbReference type="PhylomeDB" id="Q9XA86"/>
<dbReference type="Proteomes" id="UP000001973">
    <property type="component" value="Chromosome"/>
</dbReference>
<dbReference type="GO" id="GO:0005886">
    <property type="term" value="C:plasma membrane"/>
    <property type="evidence" value="ECO:0007669"/>
    <property type="project" value="UniProtKB-SubCell"/>
</dbReference>
<dbReference type="Gene3D" id="1.20.1640.10">
    <property type="entry name" value="Multidrug efflux transporter AcrB transmembrane domain"/>
    <property type="match status" value="2"/>
</dbReference>
<dbReference type="InterPro" id="IPR004869">
    <property type="entry name" value="MMPL_dom"/>
</dbReference>
<dbReference type="InterPro" id="IPR050545">
    <property type="entry name" value="Mycobact_MmpL"/>
</dbReference>
<dbReference type="InterPro" id="IPR000731">
    <property type="entry name" value="SSD"/>
</dbReference>
<dbReference type="PANTHER" id="PTHR33406">
    <property type="entry name" value="MEMBRANE PROTEIN MJ1562-RELATED"/>
    <property type="match status" value="1"/>
</dbReference>
<dbReference type="PANTHER" id="PTHR33406:SF6">
    <property type="entry name" value="MEMBRANE PROTEIN YDGH-RELATED"/>
    <property type="match status" value="1"/>
</dbReference>
<dbReference type="Pfam" id="PF03176">
    <property type="entry name" value="MMPL"/>
    <property type="match status" value="2"/>
</dbReference>
<dbReference type="SUPFAM" id="SSF82866">
    <property type="entry name" value="Multidrug efflux transporter AcrB transmembrane domain"/>
    <property type="match status" value="2"/>
</dbReference>
<dbReference type="PROSITE" id="PS50156">
    <property type="entry name" value="SSD"/>
    <property type="match status" value="2"/>
</dbReference>
<keyword id="KW-1003">Cell membrane</keyword>
<keyword id="KW-0472">Membrane</keyword>
<keyword id="KW-1185">Reference proteome</keyword>
<keyword id="KW-0812">Transmembrane</keyword>
<keyword id="KW-1133">Transmembrane helix</keyword>
<feature type="chain" id="PRO_0000103584" description="Putative membrane protein SCO0839">
    <location>
        <begin position="1"/>
        <end position="705"/>
    </location>
</feature>
<feature type="transmembrane region" description="Helical" evidence="1">
    <location>
        <begin position="16"/>
        <end position="36"/>
    </location>
</feature>
<feature type="transmembrane region" description="Helical" evidence="1">
    <location>
        <begin position="177"/>
        <end position="197"/>
    </location>
</feature>
<feature type="transmembrane region" description="Helical" evidence="1">
    <location>
        <begin position="202"/>
        <end position="222"/>
    </location>
</feature>
<feature type="transmembrane region" description="Helical" evidence="1">
    <location>
        <begin position="237"/>
        <end position="257"/>
    </location>
</feature>
<feature type="transmembrane region" description="Helical" evidence="1">
    <location>
        <begin position="281"/>
        <end position="301"/>
    </location>
</feature>
<feature type="transmembrane region" description="Helical" evidence="1">
    <location>
        <begin position="316"/>
        <end position="336"/>
    </location>
</feature>
<feature type="transmembrane region" description="Helical" evidence="1">
    <location>
        <begin position="373"/>
        <end position="393"/>
    </location>
</feature>
<feature type="transmembrane region" description="Helical" evidence="1">
    <location>
        <begin position="529"/>
        <end position="549"/>
    </location>
</feature>
<feature type="transmembrane region" description="Helical" evidence="1">
    <location>
        <begin position="554"/>
        <end position="574"/>
    </location>
</feature>
<feature type="transmembrane region" description="Helical" evidence="1">
    <location>
        <begin position="587"/>
        <end position="607"/>
    </location>
</feature>
<feature type="transmembrane region" description="Helical" evidence="1">
    <location>
        <begin position="627"/>
        <end position="647"/>
    </location>
</feature>
<feature type="transmembrane region" description="Helical" evidence="1">
    <location>
        <begin position="648"/>
        <end position="668"/>
    </location>
</feature>
<organism>
    <name type="scientific">Streptomyces coelicolor (strain ATCC BAA-471 / A3(2) / M145)</name>
    <dbReference type="NCBI Taxonomy" id="100226"/>
    <lineage>
        <taxon>Bacteria</taxon>
        <taxon>Bacillati</taxon>
        <taxon>Actinomycetota</taxon>
        <taxon>Actinomycetes</taxon>
        <taxon>Kitasatosporales</taxon>
        <taxon>Streptomycetaceae</taxon>
        <taxon>Streptomyces</taxon>
        <taxon>Streptomyces albidoflavus group</taxon>
    </lineage>
</organism>
<comment type="subcellular location">
    <subcellularLocation>
        <location evidence="2">Cell membrane</location>
        <topology evidence="2">Multi-pass membrane protein</topology>
    </subcellularLocation>
</comment>
<comment type="similarity">
    <text evidence="2">Belongs to the resistance-nodulation-cell division (RND) (TC 2.A.6) family. MmpL subfamily.</text>
</comment>
<evidence type="ECO:0000255" key="1"/>
<evidence type="ECO:0000305" key="2"/>
<name>MMPLD_STRCO</name>
<proteinExistence type="inferred from homology"/>
<accession>Q9XA86</accession>